<organism>
    <name type="scientific">Yersinia pestis bv. Antiqua (strain Nepal516)</name>
    <dbReference type="NCBI Taxonomy" id="377628"/>
    <lineage>
        <taxon>Bacteria</taxon>
        <taxon>Pseudomonadati</taxon>
        <taxon>Pseudomonadota</taxon>
        <taxon>Gammaproteobacteria</taxon>
        <taxon>Enterobacterales</taxon>
        <taxon>Yersiniaceae</taxon>
        <taxon>Yersinia</taxon>
    </lineage>
</organism>
<accession>Q1CG38</accession>
<accession>C4GW76</accession>
<gene>
    <name type="ordered locus">YPN_2714</name>
    <name type="ORF">YP516_3067</name>
</gene>
<sequence length="334" mass="37713">MSLDIDQIALHQLIKRDEQTLDVVLRDSLLPTNAVVEEMMAELHRVYSAKSKAYGLFNEQSELADALKRSRKGDEDFLSFSRAATGRLRDELAKYPFAEGGVVLFCQYRYLAVEYLLISVLSSCHSMRVNEQLDLSTTHYLDINRADIVARIDLTEWETNPESTRYLTFLTGRVGRKVSDFFMDFLSAAEGLDTKAQNRGLLQAVDDYCADAELGKNERQAYRQQVYSYCNEQLQAGEEIALQVLAQELPKLGEKDFQQFSAEQGYALEESFPADRGTLRQLTKFAGSGGGLSINFDALLLDERIFWDAATDTLTIKGTPPNLRDQLQRRAGSK</sequence>
<dbReference type="EMBL" id="CP000305">
    <property type="protein sequence ID" value="ABG19042.1"/>
    <property type="molecule type" value="Genomic_DNA"/>
</dbReference>
<dbReference type="EMBL" id="ACNQ01000017">
    <property type="protein sequence ID" value="EEO75176.1"/>
    <property type="molecule type" value="Genomic_DNA"/>
</dbReference>
<dbReference type="RefSeq" id="WP_011566199.1">
    <property type="nucleotide sequence ID" value="NC_008149.1"/>
</dbReference>
<dbReference type="SMR" id="Q1CG38"/>
<dbReference type="KEGG" id="ypn:YPN_2714"/>
<dbReference type="HOGENOM" id="CLU_063050_0_1_6"/>
<dbReference type="Proteomes" id="UP000008936">
    <property type="component" value="Chromosome"/>
</dbReference>
<dbReference type="GO" id="GO:0043590">
    <property type="term" value="C:bacterial nucleoid"/>
    <property type="evidence" value="ECO:0007669"/>
    <property type="project" value="TreeGrafter"/>
</dbReference>
<dbReference type="GO" id="GO:0005737">
    <property type="term" value="C:cytoplasm"/>
    <property type="evidence" value="ECO:0007669"/>
    <property type="project" value="UniProtKB-UniRule"/>
</dbReference>
<dbReference type="GO" id="GO:0003690">
    <property type="term" value="F:double-stranded DNA binding"/>
    <property type="evidence" value="ECO:0007669"/>
    <property type="project" value="TreeGrafter"/>
</dbReference>
<dbReference type="GO" id="GO:0003727">
    <property type="term" value="F:single-stranded RNA binding"/>
    <property type="evidence" value="ECO:0007669"/>
    <property type="project" value="TreeGrafter"/>
</dbReference>
<dbReference type="HAMAP" id="MF_00730">
    <property type="entry name" value="NdpA"/>
    <property type="match status" value="1"/>
</dbReference>
<dbReference type="InterPro" id="IPR007358">
    <property type="entry name" value="Nucleoid_associated_NdpA"/>
</dbReference>
<dbReference type="NCBIfam" id="NF001557">
    <property type="entry name" value="PRK00378.1"/>
    <property type="match status" value="1"/>
</dbReference>
<dbReference type="PANTHER" id="PTHR38772">
    <property type="match status" value="1"/>
</dbReference>
<dbReference type="PANTHER" id="PTHR38772:SF1">
    <property type="entry name" value="NUCLEOID-ASSOCIATED PROTEIN YEJK"/>
    <property type="match status" value="1"/>
</dbReference>
<dbReference type="Pfam" id="PF04245">
    <property type="entry name" value="NA37"/>
    <property type="match status" value="1"/>
</dbReference>
<feature type="chain" id="PRO_1000045959" description="Nucleoid-associated protein YPN_2714">
    <location>
        <begin position="1"/>
        <end position="334"/>
    </location>
</feature>
<feature type="sequence conflict" description="In Ref. 2; EEO75176." evidence="2" ref="2">
    <original>T</original>
    <variation>K</variation>
    <location>
        <position position="171"/>
    </location>
</feature>
<proteinExistence type="inferred from homology"/>
<keyword id="KW-0963">Cytoplasm</keyword>
<comment type="subcellular location">
    <subcellularLocation>
        <location evidence="1">Cytoplasm</location>
        <location evidence="1">Nucleoid</location>
    </subcellularLocation>
</comment>
<comment type="similarity">
    <text evidence="1">Belongs to the YejK family.</text>
</comment>
<evidence type="ECO:0000255" key="1">
    <source>
        <dbReference type="HAMAP-Rule" id="MF_00730"/>
    </source>
</evidence>
<evidence type="ECO:0000305" key="2"/>
<name>NDPA_YERPN</name>
<protein>
    <recommendedName>
        <fullName evidence="1">Nucleoid-associated protein YPN_2714</fullName>
    </recommendedName>
</protein>
<reference key="1">
    <citation type="journal article" date="2006" name="J. Bacteriol.">
        <title>Complete genome sequence of Yersinia pestis strains Antiqua and Nepal516: evidence of gene reduction in an emerging pathogen.</title>
        <authorList>
            <person name="Chain P.S.G."/>
            <person name="Hu P."/>
            <person name="Malfatti S.A."/>
            <person name="Radnedge L."/>
            <person name="Larimer F."/>
            <person name="Vergez L.M."/>
            <person name="Worsham P."/>
            <person name="Chu M.C."/>
            <person name="Andersen G.L."/>
        </authorList>
    </citation>
    <scope>NUCLEOTIDE SEQUENCE [LARGE SCALE GENOMIC DNA]</scope>
    <source>
        <strain>Nepal516</strain>
    </source>
</reference>
<reference key="2">
    <citation type="submission" date="2009-04" db="EMBL/GenBank/DDBJ databases">
        <title>Yersinia pestis Nepal516A whole genome shotgun sequencing project.</title>
        <authorList>
            <person name="Plunkett G. III"/>
            <person name="Anderson B.D."/>
            <person name="Baumler D.J."/>
            <person name="Burland V."/>
            <person name="Cabot E.L."/>
            <person name="Glasner J.D."/>
            <person name="Mau B."/>
            <person name="Neeno-Eckwall E."/>
            <person name="Perna N.T."/>
            <person name="Munk A.C."/>
            <person name="Tapia R."/>
            <person name="Green L.D."/>
            <person name="Rogers Y.C."/>
            <person name="Detter J.C."/>
            <person name="Bruce D.C."/>
            <person name="Brettin T.S."/>
        </authorList>
    </citation>
    <scope>NUCLEOTIDE SEQUENCE [LARGE SCALE GENOMIC DNA]</scope>
    <source>
        <strain>Nepal516</strain>
    </source>
</reference>